<gene>
    <name evidence="1" type="primary">lipA1</name>
    <name type="synonym">lipA</name>
    <name type="ordered locus">Pro_1670</name>
</gene>
<protein>
    <recommendedName>
        <fullName evidence="1">Lipoyl synthase 1</fullName>
        <ecNumber evidence="1">2.8.1.8</ecNumber>
    </recommendedName>
    <alternativeName>
        <fullName evidence="1">Lip-syn 1</fullName>
        <shortName evidence="1">LS 1</shortName>
    </alternativeName>
    <alternativeName>
        <fullName evidence="1">Lipoate synthase 1</fullName>
    </alternativeName>
    <alternativeName>
        <fullName evidence="1">Lipoic acid synthase 1</fullName>
    </alternativeName>
    <alternativeName>
        <fullName evidence="1">Sulfur insertion protein LipA 1</fullName>
    </alternativeName>
</protein>
<name>LIPA1_PROMA</name>
<evidence type="ECO:0000255" key="1">
    <source>
        <dbReference type="HAMAP-Rule" id="MF_00206"/>
    </source>
</evidence>
<evidence type="ECO:0000255" key="2">
    <source>
        <dbReference type="PROSITE-ProRule" id="PRU01266"/>
    </source>
</evidence>
<comment type="function">
    <text evidence="1">Catalyzes the radical-mediated insertion of two sulfur atoms into the C-6 and C-8 positions of the octanoyl moiety bound to the lipoyl domains of lipoate-dependent enzymes, thereby converting the octanoylated domains into lipoylated derivatives.</text>
</comment>
<comment type="catalytic activity">
    <reaction evidence="1">
        <text>[[Fe-S] cluster scaffold protein carrying a second [4Fe-4S](2+) cluster] + N(6)-octanoyl-L-lysyl-[protein] + 2 oxidized [2Fe-2S]-[ferredoxin] + 2 S-adenosyl-L-methionine + 4 H(+) = [[Fe-S] cluster scaffold protein] + N(6)-[(R)-dihydrolipoyl]-L-lysyl-[protein] + 4 Fe(3+) + 2 hydrogen sulfide + 2 5'-deoxyadenosine + 2 L-methionine + 2 reduced [2Fe-2S]-[ferredoxin]</text>
        <dbReference type="Rhea" id="RHEA:16585"/>
        <dbReference type="Rhea" id="RHEA-COMP:9928"/>
        <dbReference type="Rhea" id="RHEA-COMP:10000"/>
        <dbReference type="Rhea" id="RHEA-COMP:10001"/>
        <dbReference type="Rhea" id="RHEA-COMP:10475"/>
        <dbReference type="Rhea" id="RHEA-COMP:14568"/>
        <dbReference type="Rhea" id="RHEA-COMP:14569"/>
        <dbReference type="ChEBI" id="CHEBI:15378"/>
        <dbReference type="ChEBI" id="CHEBI:17319"/>
        <dbReference type="ChEBI" id="CHEBI:29034"/>
        <dbReference type="ChEBI" id="CHEBI:29919"/>
        <dbReference type="ChEBI" id="CHEBI:33722"/>
        <dbReference type="ChEBI" id="CHEBI:33737"/>
        <dbReference type="ChEBI" id="CHEBI:33738"/>
        <dbReference type="ChEBI" id="CHEBI:57844"/>
        <dbReference type="ChEBI" id="CHEBI:59789"/>
        <dbReference type="ChEBI" id="CHEBI:78809"/>
        <dbReference type="ChEBI" id="CHEBI:83100"/>
        <dbReference type="EC" id="2.8.1.8"/>
    </reaction>
</comment>
<comment type="cofactor">
    <cofactor evidence="1">
        <name>[4Fe-4S] cluster</name>
        <dbReference type="ChEBI" id="CHEBI:49883"/>
    </cofactor>
    <text evidence="1">Binds 2 [4Fe-4S] clusters per subunit. One cluster is coordinated with 3 cysteines and an exchangeable S-adenosyl-L-methionine.</text>
</comment>
<comment type="pathway">
    <text evidence="1">Protein modification; protein lipoylation via endogenous pathway; protein N(6)-(lipoyl)lysine from octanoyl-[acyl-carrier-protein]: step 2/2.</text>
</comment>
<comment type="subcellular location">
    <subcellularLocation>
        <location evidence="1">Cytoplasm</location>
    </subcellularLocation>
</comment>
<comment type="similarity">
    <text evidence="1">Belongs to the radical SAM superfamily. Lipoyl synthase family.</text>
</comment>
<reference key="1">
    <citation type="journal article" date="2003" name="Proc. Natl. Acad. Sci. U.S.A.">
        <title>Genome sequence of the cyanobacterium Prochlorococcus marinus SS120, a nearly minimal oxyphototrophic genome.</title>
        <authorList>
            <person name="Dufresne A."/>
            <person name="Salanoubat M."/>
            <person name="Partensky F."/>
            <person name="Artiguenave F."/>
            <person name="Axmann I.M."/>
            <person name="Barbe V."/>
            <person name="Duprat S."/>
            <person name="Galperin M.Y."/>
            <person name="Koonin E.V."/>
            <person name="Le Gall F."/>
            <person name="Makarova K.S."/>
            <person name="Ostrowski M."/>
            <person name="Oztas S."/>
            <person name="Robert C."/>
            <person name="Rogozin I.B."/>
            <person name="Scanlan D.J."/>
            <person name="Tandeau de Marsac N."/>
            <person name="Weissenbach J."/>
            <person name="Wincker P."/>
            <person name="Wolf Y.I."/>
            <person name="Hess W.R."/>
        </authorList>
    </citation>
    <scope>NUCLEOTIDE SEQUENCE [LARGE SCALE GENOMIC DNA]</scope>
    <source>
        <strain>SARG / CCMP1375 / SS120</strain>
    </source>
</reference>
<accession>Q7V9Z9</accession>
<feature type="chain" id="PRO_0000102336" description="Lipoyl synthase 1">
    <location>
        <begin position="1"/>
        <end position="294"/>
    </location>
</feature>
<feature type="domain" description="Radical SAM core" evidence="2">
    <location>
        <begin position="50"/>
        <end position="268"/>
    </location>
</feature>
<feature type="binding site" evidence="1">
    <location>
        <position position="38"/>
    </location>
    <ligand>
        <name>[4Fe-4S] cluster</name>
        <dbReference type="ChEBI" id="CHEBI:49883"/>
        <label>1</label>
    </ligand>
</feature>
<feature type="binding site" evidence="1">
    <location>
        <position position="43"/>
    </location>
    <ligand>
        <name>[4Fe-4S] cluster</name>
        <dbReference type="ChEBI" id="CHEBI:49883"/>
        <label>1</label>
    </ligand>
</feature>
<feature type="binding site" evidence="1">
    <location>
        <position position="49"/>
    </location>
    <ligand>
        <name>[4Fe-4S] cluster</name>
        <dbReference type="ChEBI" id="CHEBI:49883"/>
        <label>1</label>
    </ligand>
</feature>
<feature type="binding site" evidence="1">
    <location>
        <position position="64"/>
    </location>
    <ligand>
        <name>[4Fe-4S] cluster</name>
        <dbReference type="ChEBI" id="CHEBI:49883"/>
        <label>2</label>
        <note>4Fe-4S-S-AdoMet</note>
    </ligand>
</feature>
<feature type="binding site" evidence="1">
    <location>
        <position position="68"/>
    </location>
    <ligand>
        <name>[4Fe-4S] cluster</name>
        <dbReference type="ChEBI" id="CHEBI:49883"/>
        <label>2</label>
        <note>4Fe-4S-S-AdoMet</note>
    </ligand>
</feature>
<feature type="binding site" evidence="1">
    <location>
        <position position="71"/>
    </location>
    <ligand>
        <name>[4Fe-4S] cluster</name>
        <dbReference type="ChEBI" id="CHEBI:49883"/>
        <label>2</label>
        <note>4Fe-4S-S-AdoMet</note>
    </ligand>
</feature>
<feature type="binding site" evidence="1">
    <location>
        <position position="279"/>
    </location>
    <ligand>
        <name>[4Fe-4S] cluster</name>
        <dbReference type="ChEBI" id="CHEBI:49883"/>
        <label>1</label>
    </ligand>
</feature>
<organism>
    <name type="scientific">Prochlorococcus marinus (strain SARG / CCMP1375 / SS120)</name>
    <dbReference type="NCBI Taxonomy" id="167539"/>
    <lineage>
        <taxon>Bacteria</taxon>
        <taxon>Bacillati</taxon>
        <taxon>Cyanobacteriota</taxon>
        <taxon>Cyanophyceae</taxon>
        <taxon>Synechococcales</taxon>
        <taxon>Prochlorococcaceae</taxon>
        <taxon>Prochlorococcus</taxon>
    </lineage>
</organism>
<keyword id="KW-0004">4Fe-4S</keyword>
<keyword id="KW-0963">Cytoplasm</keyword>
<keyword id="KW-0408">Iron</keyword>
<keyword id="KW-0411">Iron-sulfur</keyword>
<keyword id="KW-0479">Metal-binding</keyword>
<keyword id="KW-1185">Reference proteome</keyword>
<keyword id="KW-0949">S-adenosyl-L-methionine</keyword>
<keyword id="KW-0808">Transferase</keyword>
<sequence length="294" mass="32846">MASMNTHKPDWLRVKAPQHERIGYVADLLSDLNLNTVCQEASCPNIGECFAGGTATFLIMGPGCTRACPYCDIDFDKSVRSLDPSEPERLGEAVKRLGLKHVVITSVNRDDLEDGGASQFVSCIDAVRASSVETTIELLIPDFCGNWDAFKKVMNASPNVLNHNIETVPRLYKRARPQGLYKRSLELLRRVRQESPNVYSKSGLMVGLGETDDEVLQVLSDLHDNNVDIVTIGQYLSPGTKHLPVDRFVTPDQFQKYKEEGQTRFGFLQVVSSPLTRSSYHAGEVKRLMQIYPR</sequence>
<proteinExistence type="inferred from homology"/>
<dbReference type="EC" id="2.8.1.8" evidence="1"/>
<dbReference type="EMBL" id="AE017126">
    <property type="protein sequence ID" value="AAQ00714.1"/>
    <property type="molecule type" value="Genomic_DNA"/>
</dbReference>
<dbReference type="RefSeq" id="NP_876061.1">
    <property type="nucleotide sequence ID" value="NC_005042.1"/>
</dbReference>
<dbReference type="SMR" id="Q7V9Z9"/>
<dbReference type="STRING" id="167539.Pro_1670"/>
<dbReference type="EnsemblBacteria" id="AAQ00714">
    <property type="protein sequence ID" value="AAQ00714"/>
    <property type="gene ID" value="Pro_1670"/>
</dbReference>
<dbReference type="KEGG" id="pma:Pro_1670"/>
<dbReference type="PATRIC" id="fig|167539.5.peg.1764"/>
<dbReference type="eggNOG" id="COG0320">
    <property type="taxonomic scope" value="Bacteria"/>
</dbReference>
<dbReference type="HOGENOM" id="CLU_033144_2_1_3"/>
<dbReference type="OrthoDB" id="9787898at2"/>
<dbReference type="UniPathway" id="UPA00538">
    <property type="reaction ID" value="UER00593"/>
</dbReference>
<dbReference type="Proteomes" id="UP000001420">
    <property type="component" value="Chromosome"/>
</dbReference>
<dbReference type="GO" id="GO:0005737">
    <property type="term" value="C:cytoplasm"/>
    <property type="evidence" value="ECO:0007669"/>
    <property type="project" value="UniProtKB-SubCell"/>
</dbReference>
<dbReference type="GO" id="GO:0051539">
    <property type="term" value="F:4 iron, 4 sulfur cluster binding"/>
    <property type="evidence" value="ECO:0007669"/>
    <property type="project" value="UniProtKB-UniRule"/>
</dbReference>
<dbReference type="GO" id="GO:0016992">
    <property type="term" value="F:lipoate synthase activity"/>
    <property type="evidence" value="ECO:0007669"/>
    <property type="project" value="UniProtKB-UniRule"/>
</dbReference>
<dbReference type="GO" id="GO:0046872">
    <property type="term" value="F:metal ion binding"/>
    <property type="evidence" value="ECO:0007669"/>
    <property type="project" value="UniProtKB-KW"/>
</dbReference>
<dbReference type="CDD" id="cd01335">
    <property type="entry name" value="Radical_SAM"/>
    <property type="match status" value="1"/>
</dbReference>
<dbReference type="FunFam" id="3.20.20.70:FF:000040">
    <property type="entry name" value="Lipoyl synthase"/>
    <property type="match status" value="1"/>
</dbReference>
<dbReference type="Gene3D" id="3.20.20.70">
    <property type="entry name" value="Aldolase class I"/>
    <property type="match status" value="1"/>
</dbReference>
<dbReference type="HAMAP" id="MF_00206">
    <property type="entry name" value="Lipoyl_synth"/>
    <property type="match status" value="1"/>
</dbReference>
<dbReference type="InterPro" id="IPR013785">
    <property type="entry name" value="Aldolase_TIM"/>
</dbReference>
<dbReference type="InterPro" id="IPR006638">
    <property type="entry name" value="Elp3/MiaA/NifB-like_rSAM"/>
</dbReference>
<dbReference type="InterPro" id="IPR003698">
    <property type="entry name" value="Lipoyl_synth"/>
</dbReference>
<dbReference type="InterPro" id="IPR007197">
    <property type="entry name" value="rSAM"/>
</dbReference>
<dbReference type="NCBIfam" id="TIGR00510">
    <property type="entry name" value="lipA"/>
    <property type="match status" value="1"/>
</dbReference>
<dbReference type="NCBIfam" id="NF004019">
    <property type="entry name" value="PRK05481.1"/>
    <property type="match status" value="1"/>
</dbReference>
<dbReference type="NCBIfam" id="NF009544">
    <property type="entry name" value="PRK12928.1"/>
    <property type="match status" value="1"/>
</dbReference>
<dbReference type="PANTHER" id="PTHR10949">
    <property type="entry name" value="LIPOYL SYNTHASE"/>
    <property type="match status" value="1"/>
</dbReference>
<dbReference type="PANTHER" id="PTHR10949:SF0">
    <property type="entry name" value="LIPOYL SYNTHASE, MITOCHONDRIAL"/>
    <property type="match status" value="1"/>
</dbReference>
<dbReference type="Pfam" id="PF04055">
    <property type="entry name" value="Radical_SAM"/>
    <property type="match status" value="1"/>
</dbReference>
<dbReference type="PIRSF" id="PIRSF005963">
    <property type="entry name" value="Lipoyl_synth"/>
    <property type="match status" value="1"/>
</dbReference>
<dbReference type="SFLD" id="SFLDF00271">
    <property type="entry name" value="lipoyl_synthase"/>
    <property type="match status" value="1"/>
</dbReference>
<dbReference type="SFLD" id="SFLDG01058">
    <property type="entry name" value="lipoyl_synthase_like"/>
    <property type="match status" value="1"/>
</dbReference>
<dbReference type="SMART" id="SM00729">
    <property type="entry name" value="Elp3"/>
    <property type="match status" value="1"/>
</dbReference>
<dbReference type="SUPFAM" id="SSF102114">
    <property type="entry name" value="Radical SAM enzymes"/>
    <property type="match status" value="1"/>
</dbReference>
<dbReference type="PROSITE" id="PS51918">
    <property type="entry name" value="RADICAL_SAM"/>
    <property type="match status" value="1"/>
</dbReference>